<accession>A9IRU1</accession>
<comment type="function">
    <text evidence="1">Binds as a heterodimer with protein bS6 to the central domain of the 16S rRNA, where it helps stabilize the platform of the 30S subunit.</text>
</comment>
<comment type="subunit">
    <text evidence="1">Part of the 30S ribosomal subunit. Forms a tight heterodimer with protein bS6.</text>
</comment>
<comment type="similarity">
    <text evidence="1">Belongs to the bacterial ribosomal protein bS18 family.</text>
</comment>
<gene>
    <name evidence="1" type="primary">rpsR</name>
    <name type="ordered locus">BT_0813</name>
</gene>
<sequence length="82" mass="9530">MTDTNQNSSRRPFHRRRKTCPFSGATAPKIDYKDIKLLQRYISERGKIVPSRITAVSQKKQRELANAIKRARFLGLLPYVIK</sequence>
<proteinExistence type="inferred from homology"/>
<reference key="1">
    <citation type="journal article" date="2007" name="Nat. Genet.">
        <title>Genomic analysis of Bartonella identifies type IV secretion systems as host adaptability factors.</title>
        <authorList>
            <person name="Saenz H.L."/>
            <person name="Engel P."/>
            <person name="Stoeckli M.C."/>
            <person name="Lanz C."/>
            <person name="Raddatz G."/>
            <person name="Vayssier-Taussat M."/>
            <person name="Birtles R."/>
            <person name="Schuster S.C."/>
            <person name="Dehio C."/>
        </authorList>
    </citation>
    <scope>NUCLEOTIDE SEQUENCE [LARGE SCALE GENOMIC DNA]</scope>
    <source>
        <strain>CIP 105476 / IBS 506</strain>
    </source>
</reference>
<feature type="chain" id="PRO_1000078690" description="Small ribosomal subunit protein bS18">
    <location>
        <begin position="1"/>
        <end position="82"/>
    </location>
</feature>
<feature type="region of interest" description="Disordered" evidence="2">
    <location>
        <begin position="1"/>
        <end position="21"/>
    </location>
</feature>
<feature type="compositionally biased region" description="Polar residues" evidence="2">
    <location>
        <begin position="1"/>
        <end position="10"/>
    </location>
</feature>
<name>RS18_BART1</name>
<keyword id="KW-0687">Ribonucleoprotein</keyword>
<keyword id="KW-0689">Ribosomal protein</keyword>
<keyword id="KW-0694">RNA-binding</keyword>
<keyword id="KW-0699">rRNA-binding</keyword>
<dbReference type="EMBL" id="AM260525">
    <property type="protein sequence ID" value="CAK01223.1"/>
    <property type="molecule type" value="Genomic_DNA"/>
</dbReference>
<dbReference type="RefSeq" id="WP_012231336.1">
    <property type="nucleotide sequence ID" value="NC_010161.1"/>
</dbReference>
<dbReference type="SMR" id="A9IRU1"/>
<dbReference type="KEGG" id="btr:BT_0813"/>
<dbReference type="eggNOG" id="COG0238">
    <property type="taxonomic scope" value="Bacteria"/>
</dbReference>
<dbReference type="HOGENOM" id="CLU_148710_2_2_5"/>
<dbReference type="Proteomes" id="UP000001592">
    <property type="component" value="Chromosome"/>
</dbReference>
<dbReference type="GO" id="GO:0022627">
    <property type="term" value="C:cytosolic small ribosomal subunit"/>
    <property type="evidence" value="ECO:0007669"/>
    <property type="project" value="TreeGrafter"/>
</dbReference>
<dbReference type="GO" id="GO:0070181">
    <property type="term" value="F:small ribosomal subunit rRNA binding"/>
    <property type="evidence" value="ECO:0007669"/>
    <property type="project" value="TreeGrafter"/>
</dbReference>
<dbReference type="GO" id="GO:0003735">
    <property type="term" value="F:structural constituent of ribosome"/>
    <property type="evidence" value="ECO:0007669"/>
    <property type="project" value="InterPro"/>
</dbReference>
<dbReference type="GO" id="GO:0006412">
    <property type="term" value="P:translation"/>
    <property type="evidence" value="ECO:0007669"/>
    <property type="project" value="UniProtKB-UniRule"/>
</dbReference>
<dbReference type="Gene3D" id="4.10.640.10">
    <property type="entry name" value="Ribosomal protein S18"/>
    <property type="match status" value="1"/>
</dbReference>
<dbReference type="HAMAP" id="MF_00270">
    <property type="entry name" value="Ribosomal_bS18"/>
    <property type="match status" value="1"/>
</dbReference>
<dbReference type="InterPro" id="IPR001648">
    <property type="entry name" value="Ribosomal_bS18"/>
</dbReference>
<dbReference type="InterPro" id="IPR018275">
    <property type="entry name" value="Ribosomal_bS18_CS"/>
</dbReference>
<dbReference type="InterPro" id="IPR036870">
    <property type="entry name" value="Ribosomal_bS18_sf"/>
</dbReference>
<dbReference type="NCBIfam" id="TIGR00165">
    <property type="entry name" value="S18"/>
    <property type="match status" value="1"/>
</dbReference>
<dbReference type="PANTHER" id="PTHR13479">
    <property type="entry name" value="30S RIBOSOMAL PROTEIN S18"/>
    <property type="match status" value="1"/>
</dbReference>
<dbReference type="PANTHER" id="PTHR13479:SF40">
    <property type="entry name" value="SMALL RIBOSOMAL SUBUNIT PROTEIN BS18M"/>
    <property type="match status" value="1"/>
</dbReference>
<dbReference type="Pfam" id="PF01084">
    <property type="entry name" value="Ribosomal_S18"/>
    <property type="match status" value="1"/>
</dbReference>
<dbReference type="PRINTS" id="PR00974">
    <property type="entry name" value="RIBOSOMALS18"/>
</dbReference>
<dbReference type="SUPFAM" id="SSF46911">
    <property type="entry name" value="Ribosomal protein S18"/>
    <property type="match status" value="1"/>
</dbReference>
<dbReference type="PROSITE" id="PS00057">
    <property type="entry name" value="RIBOSOMAL_S18"/>
    <property type="match status" value="1"/>
</dbReference>
<evidence type="ECO:0000255" key="1">
    <source>
        <dbReference type="HAMAP-Rule" id="MF_00270"/>
    </source>
</evidence>
<evidence type="ECO:0000256" key="2">
    <source>
        <dbReference type="SAM" id="MobiDB-lite"/>
    </source>
</evidence>
<evidence type="ECO:0000305" key="3"/>
<protein>
    <recommendedName>
        <fullName evidence="1">Small ribosomal subunit protein bS18</fullName>
    </recommendedName>
    <alternativeName>
        <fullName evidence="3">30S ribosomal protein S18</fullName>
    </alternativeName>
</protein>
<organism>
    <name type="scientific">Bartonella tribocorum (strain CIP 105476 / IBS 506)</name>
    <dbReference type="NCBI Taxonomy" id="382640"/>
    <lineage>
        <taxon>Bacteria</taxon>
        <taxon>Pseudomonadati</taxon>
        <taxon>Pseudomonadota</taxon>
        <taxon>Alphaproteobacteria</taxon>
        <taxon>Hyphomicrobiales</taxon>
        <taxon>Bartonellaceae</taxon>
        <taxon>Bartonella</taxon>
    </lineage>
</organism>